<keyword id="KW-0378">Hydrolase</keyword>
<keyword id="KW-1185">Reference proteome</keyword>
<gene>
    <name evidence="1" type="primary">rppH</name>
    <name evidence="1" type="synonym">nudH</name>
    <name type="ordered locus">Tbd_2110</name>
</gene>
<sequence>MIDREGYRPNVGIILCNARNQVFWGKRVNQHAWQFPQGGINAGETPEQAMFRELEEEVGLLPGHVRILGRTREWLRYDVPPHWTRRDNRGLYRGQKQIWFLLRLTGRDCDVSLRASAHPEFDAWRWNEYWVPMEAVVDFKREVYRLALEELERYLHRDLRYLRQHTRRPGERREVPFDLQLKP</sequence>
<feature type="chain" id="PRO_0000231940" description="RNA pyrophosphohydrolase">
    <location>
        <begin position="1"/>
        <end position="183"/>
    </location>
</feature>
<feature type="domain" description="Nudix hydrolase" evidence="1">
    <location>
        <begin position="6"/>
        <end position="149"/>
    </location>
</feature>
<feature type="short sequence motif" description="Nudix box">
    <location>
        <begin position="38"/>
        <end position="59"/>
    </location>
</feature>
<proteinExistence type="inferred from homology"/>
<comment type="function">
    <text evidence="1">Accelerates the degradation of transcripts by removing pyrophosphate from the 5'-end of triphosphorylated RNA, leading to a more labile monophosphorylated state that can stimulate subsequent ribonuclease cleavage.</text>
</comment>
<comment type="cofactor">
    <cofactor evidence="1">
        <name>a divalent metal cation</name>
        <dbReference type="ChEBI" id="CHEBI:60240"/>
    </cofactor>
</comment>
<comment type="similarity">
    <text evidence="1">Belongs to the Nudix hydrolase family. RppH subfamily.</text>
</comment>
<protein>
    <recommendedName>
        <fullName evidence="1">RNA pyrophosphohydrolase</fullName>
        <ecNumber evidence="1">3.6.1.-</ecNumber>
    </recommendedName>
    <alternativeName>
        <fullName evidence="1">(Di)nucleoside polyphosphate hydrolase</fullName>
    </alternativeName>
</protein>
<dbReference type="EC" id="3.6.1.-" evidence="1"/>
<dbReference type="EMBL" id="CP000116">
    <property type="protein sequence ID" value="AAZ98063.1"/>
    <property type="molecule type" value="Genomic_DNA"/>
</dbReference>
<dbReference type="RefSeq" id="WP_011312622.1">
    <property type="nucleotide sequence ID" value="NC_007404.1"/>
</dbReference>
<dbReference type="SMR" id="Q3SH26"/>
<dbReference type="STRING" id="292415.Tbd_2110"/>
<dbReference type="KEGG" id="tbd:Tbd_2110"/>
<dbReference type="eggNOG" id="COG0494">
    <property type="taxonomic scope" value="Bacteria"/>
</dbReference>
<dbReference type="HOGENOM" id="CLU_087195_3_1_4"/>
<dbReference type="OrthoDB" id="9816040at2"/>
<dbReference type="Proteomes" id="UP000008291">
    <property type="component" value="Chromosome"/>
</dbReference>
<dbReference type="GO" id="GO:0016462">
    <property type="term" value="F:pyrophosphatase activity"/>
    <property type="evidence" value="ECO:0007669"/>
    <property type="project" value="UniProtKB-ARBA"/>
</dbReference>
<dbReference type="CDD" id="cd03671">
    <property type="entry name" value="NUDIX_Ap4A_hydrolase_plant_like"/>
    <property type="match status" value="1"/>
</dbReference>
<dbReference type="FunFam" id="3.90.79.10:FF:000001">
    <property type="entry name" value="RNA pyrophosphohydrolase"/>
    <property type="match status" value="1"/>
</dbReference>
<dbReference type="Gene3D" id="3.90.79.10">
    <property type="entry name" value="Nucleoside Triphosphate Pyrophosphohydrolase"/>
    <property type="match status" value="1"/>
</dbReference>
<dbReference type="HAMAP" id="MF_00298">
    <property type="entry name" value="Nudix_RppH"/>
    <property type="match status" value="1"/>
</dbReference>
<dbReference type="InterPro" id="IPR020476">
    <property type="entry name" value="Nudix_hydrolase"/>
</dbReference>
<dbReference type="InterPro" id="IPR015797">
    <property type="entry name" value="NUDIX_hydrolase-like_dom_sf"/>
</dbReference>
<dbReference type="InterPro" id="IPR020084">
    <property type="entry name" value="NUDIX_hydrolase_CS"/>
</dbReference>
<dbReference type="InterPro" id="IPR000086">
    <property type="entry name" value="NUDIX_hydrolase_dom"/>
</dbReference>
<dbReference type="InterPro" id="IPR022927">
    <property type="entry name" value="RppH"/>
</dbReference>
<dbReference type="NCBIfam" id="NF001935">
    <property type="entry name" value="PRK00714.1-2"/>
    <property type="match status" value="1"/>
</dbReference>
<dbReference type="NCBIfam" id="NF001937">
    <property type="entry name" value="PRK00714.1-4"/>
    <property type="match status" value="1"/>
</dbReference>
<dbReference type="NCBIfam" id="NF001938">
    <property type="entry name" value="PRK00714.1-5"/>
    <property type="match status" value="1"/>
</dbReference>
<dbReference type="PANTHER" id="PTHR43736">
    <property type="entry name" value="ADP-RIBOSE PYROPHOSPHATASE"/>
    <property type="match status" value="1"/>
</dbReference>
<dbReference type="PANTHER" id="PTHR43736:SF1">
    <property type="entry name" value="DIHYDRONEOPTERIN TRIPHOSPHATE DIPHOSPHATASE"/>
    <property type="match status" value="1"/>
</dbReference>
<dbReference type="Pfam" id="PF00293">
    <property type="entry name" value="NUDIX"/>
    <property type="match status" value="1"/>
</dbReference>
<dbReference type="PRINTS" id="PR00502">
    <property type="entry name" value="NUDIXFAMILY"/>
</dbReference>
<dbReference type="SUPFAM" id="SSF55811">
    <property type="entry name" value="Nudix"/>
    <property type="match status" value="1"/>
</dbReference>
<dbReference type="PROSITE" id="PS51462">
    <property type="entry name" value="NUDIX"/>
    <property type="match status" value="1"/>
</dbReference>
<dbReference type="PROSITE" id="PS00893">
    <property type="entry name" value="NUDIX_BOX"/>
    <property type="match status" value="1"/>
</dbReference>
<evidence type="ECO:0000255" key="1">
    <source>
        <dbReference type="HAMAP-Rule" id="MF_00298"/>
    </source>
</evidence>
<reference key="1">
    <citation type="journal article" date="2006" name="J. Bacteriol.">
        <title>The genome sequence of the obligately chemolithoautotrophic, facultatively anaerobic bacterium Thiobacillus denitrificans.</title>
        <authorList>
            <person name="Beller H.R."/>
            <person name="Chain P.S."/>
            <person name="Letain T.E."/>
            <person name="Chakicherla A."/>
            <person name="Larimer F.W."/>
            <person name="Richardson P.M."/>
            <person name="Coleman M.A."/>
            <person name="Wood A.P."/>
            <person name="Kelly D.P."/>
        </authorList>
    </citation>
    <scope>NUCLEOTIDE SEQUENCE [LARGE SCALE GENOMIC DNA]</scope>
    <source>
        <strain>ATCC 25259 / T1</strain>
    </source>
</reference>
<accession>Q3SH26</accession>
<organism>
    <name type="scientific">Thiobacillus denitrificans (strain ATCC 25259 / T1)</name>
    <dbReference type="NCBI Taxonomy" id="292415"/>
    <lineage>
        <taxon>Bacteria</taxon>
        <taxon>Pseudomonadati</taxon>
        <taxon>Pseudomonadota</taxon>
        <taxon>Betaproteobacteria</taxon>
        <taxon>Nitrosomonadales</taxon>
        <taxon>Thiobacillaceae</taxon>
        <taxon>Thiobacillus</taxon>
    </lineage>
</organism>
<name>RPPH_THIDA</name>